<evidence type="ECO:0000250" key="1">
    <source>
        <dbReference type="UniProtKB" id="A9JTM7"/>
    </source>
</evidence>
<evidence type="ECO:0000250" key="2">
    <source>
        <dbReference type="UniProtKB" id="Q80UF9"/>
    </source>
</evidence>
<evidence type="ECO:0000256" key="3">
    <source>
        <dbReference type="SAM" id="MobiDB-lite"/>
    </source>
</evidence>
<evidence type="ECO:0000303" key="4">
    <source>
    </source>
</evidence>
<evidence type="ECO:0000305" key="5"/>
<evidence type="ECO:0000312" key="6">
    <source>
        <dbReference type="HGNC" id="HGNC:19658"/>
    </source>
</evidence>
<evidence type="ECO:0007744" key="7">
    <source>
    </source>
</evidence>
<sequence length="596" mass="66296">MGRGARAAAAQSRWGRASRASVSPGRTIRSAPAVGEAQETEAAPEKENRVDVGAEERAAATRPRQKSWLVRHFSLLLRRDRQAQKAGQLFSGLLALNVVFLGGAFICSMIFNKVAVTLGDVWILLATLKVLSLLWLLYYVASTTRRPHAVLYQDPHAGPLWVRGSLVLFGSCTFCLNIFRVGYDVSHIRCKSQLDLVFSVIEMVFIGVQTWVLWKHCKDCVRVQTNFTRCGLMLTLATNLLLWVLAVTNDSMHREIEAELGILMEKSTGNETNTCLCLNATACEAFRRGFLMLYPFSTEYCLICCAVLFVMWKNVGRHVAPHMGAHPATAPFHLHGAIFGPLLGLLVLLAGVCVFVLFQIEASGPAIACQYFTLYYAFYVAVLPTMSLACLAGTAIHGLEERELDTVKNPTRSLDVVLLMGAALGQMGIAYFSIVAIVAKRPHELLNRLILAYSLLLILQHIAQNLFIIEGLHRRPLWETVPEGLAGKQEAEPPRRGSLLELGQGLQRASLAYIHSYSHLNWKRRALKEISLFLILCNITLWMMPAFGIHPEFENGLEKDFYGYQIWFAIVNFGLPLGVFYRMHSVGGLVEVYLGA</sequence>
<proteinExistence type="evidence at protein level"/>
<feature type="chain" id="PRO_0000313822" description="Proton channel OTOP3">
    <location>
        <begin position="1"/>
        <end position="596"/>
    </location>
</feature>
<feature type="topological domain" description="Cytoplasmic" evidence="1">
    <location>
        <begin position="1"/>
        <end position="88"/>
    </location>
</feature>
<feature type="transmembrane region" description="Helical; Name=1" evidence="1">
    <location>
        <begin position="89"/>
        <end position="109"/>
    </location>
</feature>
<feature type="topological domain" description="Extracellular" evidence="5">
    <location>
        <begin position="110"/>
        <end position="119"/>
    </location>
</feature>
<feature type="transmembrane region" description="Helical; Name=2" evidence="1">
    <location>
        <begin position="120"/>
        <end position="143"/>
    </location>
</feature>
<feature type="topological domain" description="Cytoplasmic" evidence="5">
    <location>
        <begin position="144"/>
        <end position="159"/>
    </location>
</feature>
<feature type="transmembrane region" description="Helical; Name=3" evidence="1">
    <location>
        <begin position="160"/>
        <end position="181"/>
    </location>
</feature>
<feature type="topological domain" description="Extracellular" evidence="5">
    <location>
        <begin position="182"/>
        <end position="193"/>
    </location>
</feature>
<feature type="transmembrane region" description="Helical; Name=4" evidence="1">
    <location>
        <begin position="194"/>
        <end position="217"/>
    </location>
</feature>
<feature type="topological domain" description="Cytoplasmic" evidence="5">
    <location>
        <begin position="218"/>
        <end position="225"/>
    </location>
</feature>
<feature type="transmembrane region" description="Helical; Name=5" evidence="1">
    <location>
        <begin position="226"/>
        <end position="248"/>
    </location>
</feature>
<feature type="topological domain" description="Extracellular" evidence="5">
    <location>
        <begin position="249"/>
        <end position="295"/>
    </location>
</feature>
<feature type="transmembrane region" description="Helical; Name=6" evidence="1">
    <location>
        <begin position="296"/>
        <end position="312"/>
    </location>
</feature>
<feature type="topological domain" description="Cytoplasmic" evidence="5">
    <location>
        <begin position="313"/>
        <end position="338"/>
    </location>
</feature>
<feature type="transmembrane region" description="Helical; Name=7" evidence="1">
    <location>
        <begin position="339"/>
        <end position="358"/>
    </location>
</feature>
<feature type="topological domain" description="Extracellular" evidence="5">
    <location>
        <begin position="359"/>
        <end position="372"/>
    </location>
</feature>
<feature type="transmembrane region" description="Helical; Name=8" evidence="1">
    <location>
        <begin position="373"/>
        <end position="395"/>
    </location>
</feature>
<feature type="topological domain" description="Cytoplasmic" evidence="5">
    <location>
        <begin position="396"/>
        <end position="413"/>
    </location>
</feature>
<feature type="transmembrane region" description="Helical; Name=9" evidence="1">
    <location>
        <begin position="414"/>
        <end position="435"/>
    </location>
</feature>
<feature type="topological domain" description="Extracellular" evidence="5">
    <location>
        <begin position="436"/>
        <end position="446"/>
    </location>
</feature>
<feature type="transmembrane region" description="Helical; Name=10" evidence="1">
    <location>
        <begin position="447"/>
        <end position="469"/>
    </location>
</feature>
<feature type="topological domain" description="Cytoplasmic" evidence="5">
    <location>
        <begin position="470"/>
        <end position="529"/>
    </location>
</feature>
<feature type="transmembrane region" description="Helical; Name=11" evidence="1">
    <location>
        <begin position="530"/>
        <end position="547"/>
    </location>
</feature>
<feature type="topological domain" description="Extracellular" evidence="5">
    <location>
        <begin position="548"/>
        <end position="566"/>
    </location>
</feature>
<feature type="transmembrane region" description="Helical; Name=12" evidence="1">
    <location>
        <begin position="567"/>
        <end position="589"/>
    </location>
</feature>
<feature type="topological domain" description="Cytoplasmic" evidence="1">
    <location>
        <begin position="590"/>
        <end position="596"/>
    </location>
</feature>
<feature type="region of interest" description="Disordered" evidence="3">
    <location>
        <begin position="1"/>
        <end position="59"/>
    </location>
</feature>
<feature type="compositionally biased region" description="Low complexity" evidence="3">
    <location>
        <begin position="1"/>
        <end position="21"/>
    </location>
</feature>
<feature type="compositionally biased region" description="Basic and acidic residues" evidence="3">
    <location>
        <begin position="43"/>
        <end position="59"/>
    </location>
</feature>
<feature type="modified residue" description="Phosphoserine" evidence="7">
    <location>
        <position position="21"/>
    </location>
</feature>
<feature type="modified residue" description="Phosphoserine" evidence="7">
    <location>
        <position position="23"/>
    </location>
</feature>
<feature type="splice variant" id="VSP_062265" description="In isoform 2.">
    <original>GRGARAAAAQSRWGRASRASVSPGRTIRSAPAVG</original>
    <variation>PLPASAPAEATPMPSS</variation>
    <location>
        <begin position="2"/>
        <end position="35"/>
    </location>
</feature>
<feature type="sequence variant" id="VAR_037762" description="In dbSNP:rs7210616.">
    <original>R</original>
    <variation>Q</variation>
    <location>
        <position position="64"/>
    </location>
</feature>
<feature type="sequence variant" id="VAR_037763" description="In dbSNP:rs9890664.">
    <original>R</original>
    <variation>Q</variation>
    <location>
        <position position="146"/>
    </location>
</feature>
<feature type="sequence variant" id="VAR_037764" description="In dbSNP:rs1542752.">
    <original>S</original>
    <variation>P</variation>
    <location>
        <position position="199"/>
    </location>
</feature>
<feature type="sequence variant" id="VAR_062217" description="In dbSNP:rs35131040.">
    <original>L</original>
    <variation>V</variation>
    <location>
        <position position="477"/>
    </location>
</feature>
<gene>
    <name evidence="4 6" type="primary">OTOP3</name>
</gene>
<accession>Q7RTS5</accession>
<accession>A0A2U3TZI1</accession>
<dbReference type="EMBL" id="AC087651">
    <property type="status" value="NOT_ANNOTATED_CDS"/>
    <property type="molecule type" value="Genomic_DNA"/>
</dbReference>
<dbReference type="EMBL" id="KF456318">
    <property type="status" value="NOT_ANNOTATED_CDS"/>
    <property type="molecule type" value="Genomic_DNA"/>
</dbReference>
<dbReference type="EMBL" id="BK000568">
    <property type="protein sequence ID" value="DAA00896.1"/>
    <property type="molecule type" value="mRNA"/>
</dbReference>
<dbReference type="CCDS" id="CCDS86637.1">
    <molecule id="Q7RTS5-2"/>
</dbReference>
<dbReference type="RefSeq" id="NP_001258934.1">
    <molecule id="Q7RTS5-2"/>
    <property type="nucleotide sequence ID" value="NM_001272005.2"/>
</dbReference>
<dbReference type="RefSeq" id="NP_839947.1">
    <molecule id="Q7RTS5-1"/>
    <property type="nucleotide sequence ID" value="NM_178233.2"/>
</dbReference>
<dbReference type="SMR" id="Q7RTS5"/>
<dbReference type="BioGRID" id="131488">
    <property type="interactions" value="9"/>
</dbReference>
<dbReference type="FunCoup" id="Q7RTS5">
    <property type="interactions" value="242"/>
</dbReference>
<dbReference type="IntAct" id="Q7RTS5">
    <property type="interactions" value="7"/>
</dbReference>
<dbReference type="STRING" id="9606.ENSP00000464577"/>
<dbReference type="TCDB" id="1.A.110.1.4">
    <property type="family name" value="the channel-forming otopetrin (otop) family"/>
</dbReference>
<dbReference type="GlyGen" id="Q7RTS5">
    <property type="glycosylation" value="1 site, 1 O-linked glycan (1 site)"/>
</dbReference>
<dbReference type="iPTMnet" id="Q7RTS5"/>
<dbReference type="PhosphoSitePlus" id="Q7RTS5"/>
<dbReference type="BioMuta" id="OTOP3"/>
<dbReference type="DMDM" id="74713144"/>
<dbReference type="jPOST" id="Q7RTS5"/>
<dbReference type="MassIVE" id="A0A2U3TZI1"/>
<dbReference type="PaxDb" id="9606-ENSP00000328090"/>
<dbReference type="PeptideAtlas" id="Q7RTS5"/>
<dbReference type="ProteomicsDB" id="68893"/>
<dbReference type="Antibodypedia" id="19484">
    <property type="antibodies" value="78 antibodies from 19 providers"/>
</dbReference>
<dbReference type="DNASU" id="347741"/>
<dbReference type="Ensembl" id="ENST00000328801.6">
    <molecule id="Q7RTS5-2"/>
    <property type="protein sequence ID" value="ENSP00000328090.5"/>
    <property type="gene ID" value="ENSG00000182938.7"/>
</dbReference>
<dbReference type="GeneID" id="347741"/>
<dbReference type="KEGG" id="hsa:347741"/>
<dbReference type="MANE-Select" id="ENST00000328801.6">
    <molecule id="Q7RTS5-2"/>
    <property type="protein sequence ID" value="ENSP00000328090.5"/>
    <property type="RefSeq nucleotide sequence ID" value="NM_001272005.2"/>
    <property type="RefSeq protein sequence ID" value="NP_001258934.1"/>
</dbReference>
<dbReference type="UCSC" id="uc010wrr.4">
    <molecule id="Q7RTS5-1"/>
    <property type="organism name" value="human"/>
</dbReference>
<dbReference type="AGR" id="HGNC:19658"/>
<dbReference type="CTD" id="347741"/>
<dbReference type="DisGeNET" id="347741"/>
<dbReference type="GeneCards" id="OTOP3"/>
<dbReference type="HGNC" id="HGNC:19658">
    <property type="gene designation" value="OTOP3"/>
</dbReference>
<dbReference type="MIM" id="607828">
    <property type="type" value="gene"/>
</dbReference>
<dbReference type="neXtProt" id="NX_Q7RTS5"/>
<dbReference type="OpenTargets" id="ENSG00000182938"/>
<dbReference type="PharmGKB" id="PA134888566"/>
<dbReference type="VEuPathDB" id="HostDB:ENSG00000182938"/>
<dbReference type="eggNOG" id="KOG4740">
    <property type="taxonomic scope" value="Eukaryota"/>
</dbReference>
<dbReference type="GeneTree" id="ENSGT00940000160638"/>
<dbReference type="HOGENOM" id="CLU_032913_0_0_1"/>
<dbReference type="InParanoid" id="Q7RTS5"/>
<dbReference type="OMA" id="NRVDMGA"/>
<dbReference type="OrthoDB" id="6429739at2759"/>
<dbReference type="PAN-GO" id="Q7RTS5">
    <property type="GO annotations" value="3 GO annotations based on evolutionary models"/>
</dbReference>
<dbReference type="PhylomeDB" id="Q7RTS5"/>
<dbReference type="TreeFam" id="TF313428"/>
<dbReference type="PathwayCommons" id="Q7RTS5"/>
<dbReference type="SignaLink" id="Q7RTS5"/>
<dbReference type="BioGRID-ORCS" id="347741">
    <property type="hits" value="10 hits in 1145 CRISPR screens"/>
</dbReference>
<dbReference type="GenomeRNAi" id="347741"/>
<dbReference type="Pharos" id="Q7RTS5">
    <property type="development level" value="Tdark"/>
</dbReference>
<dbReference type="PRO" id="PR:Q7RTS5"/>
<dbReference type="Proteomes" id="UP000005640">
    <property type="component" value="Chromosome 17"/>
</dbReference>
<dbReference type="RNAct" id="Q7RTS5">
    <property type="molecule type" value="protein"/>
</dbReference>
<dbReference type="Bgee" id="ENSG00000182938">
    <property type="expression patterns" value="Expressed in duodenum and 27 other cell types or tissues"/>
</dbReference>
<dbReference type="GO" id="GO:0016020">
    <property type="term" value="C:membrane"/>
    <property type="evidence" value="ECO:0000318"/>
    <property type="project" value="GO_Central"/>
</dbReference>
<dbReference type="GO" id="GO:0005886">
    <property type="term" value="C:plasma membrane"/>
    <property type="evidence" value="ECO:0007669"/>
    <property type="project" value="UniProtKB-SubCell"/>
</dbReference>
<dbReference type="GO" id="GO:0042802">
    <property type="term" value="F:identical protein binding"/>
    <property type="evidence" value="ECO:0000250"/>
    <property type="project" value="UniProtKB"/>
</dbReference>
<dbReference type="GO" id="GO:0015252">
    <property type="term" value="F:proton channel activity"/>
    <property type="evidence" value="ECO:0000250"/>
    <property type="project" value="UniProtKB"/>
</dbReference>
<dbReference type="GO" id="GO:1902600">
    <property type="term" value="P:proton transmembrane transport"/>
    <property type="evidence" value="ECO:0000250"/>
    <property type="project" value="UniProtKB"/>
</dbReference>
<dbReference type="InterPro" id="IPR004878">
    <property type="entry name" value="Otopetrin"/>
</dbReference>
<dbReference type="InterPro" id="IPR013087">
    <property type="entry name" value="Znf_C2H2_type"/>
</dbReference>
<dbReference type="PANTHER" id="PTHR21522">
    <property type="entry name" value="PROTON CHANNEL OTOP"/>
    <property type="match status" value="1"/>
</dbReference>
<dbReference type="PANTHER" id="PTHR21522:SF36">
    <property type="entry name" value="PROTON CHANNEL OTOP3"/>
    <property type="match status" value="1"/>
</dbReference>
<dbReference type="Pfam" id="PF03189">
    <property type="entry name" value="Otopetrin"/>
    <property type="match status" value="2"/>
</dbReference>
<reference key="1">
    <citation type="journal article" date="2006" name="Nature">
        <title>DNA sequence of human chromosome 17 and analysis of rearrangement in the human lineage.</title>
        <authorList>
            <person name="Zody M.C."/>
            <person name="Garber M."/>
            <person name="Adams D.J."/>
            <person name="Sharpe T."/>
            <person name="Harrow J."/>
            <person name="Lupski J.R."/>
            <person name="Nicholson C."/>
            <person name="Searle S.M."/>
            <person name="Wilming L."/>
            <person name="Young S.K."/>
            <person name="Abouelleil A."/>
            <person name="Allen N.R."/>
            <person name="Bi W."/>
            <person name="Bloom T."/>
            <person name="Borowsky M.L."/>
            <person name="Bugalter B.E."/>
            <person name="Butler J."/>
            <person name="Chang J.L."/>
            <person name="Chen C.-K."/>
            <person name="Cook A."/>
            <person name="Corum B."/>
            <person name="Cuomo C.A."/>
            <person name="de Jong P.J."/>
            <person name="DeCaprio D."/>
            <person name="Dewar K."/>
            <person name="FitzGerald M."/>
            <person name="Gilbert J."/>
            <person name="Gibson R."/>
            <person name="Gnerre S."/>
            <person name="Goldstein S."/>
            <person name="Grafham D.V."/>
            <person name="Grocock R."/>
            <person name="Hafez N."/>
            <person name="Hagopian D.S."/>
            <person name="Hart E."/>
            <person name="Norman C.H."/>
            <person name="Humphray S."/>
            <person name="Jaffe D.B."/>
            <person name="Jones M."/>
            <person name="Kamal M."/>
            <person name="Khodiyar V.K."/>
            <person name="LaButti K."/>
            <person name="Laird G."/>
            <person name="Lehoczky J."/>
            <person name="Liu X."/>
            <person name="Lokyitsang T."/>
            <person name="Loveland J."/>
            <person name="Lui A."/>
            <person name="Macdonald P."/>
            <person name="Major J.E."/>
            <person name="Matthews L."/>
            <person name="Mauceli E."/>
            <person name="McCarroll S.A."/>
            <person name="Mihalev A.H."/>
            <person name="Mudge J."/>
            <person name="Nguyen C."/>
            <person name="Nicol R."/>
            <person name="O'Leary S.B."/>
            <person name="Osoegawa K."/>
            <person name="Schwartz D.C."/>
            <person name="Shaw-Smith C."/>
            <person name="Stankiewicz P."/>
            <person name="Steward C."/>
            <person name="Swarbreck D."/>
            <person name="Venkataraman V."/>
            <person name="Whittaker C.A."/>
            <person name="Yang X."/>
            <person name="Zimmer A.R."/>
            <person name="Bradley A."/>
            <person name="Hubbard T."/>
            <person name="Birren B.W."/>
            <person name="Rogers J."/>
            <person name="Lander E.S."/>
            <person name="Nusbaum C."/>
        </authorList>
    </citation>
    <scope>NUCLEOTIDE SEQUENCE [LARGE SCALE GENOMIC DNA]</scope>
</reference>
<reference key="2">
    <citation type="journal article" date="2003" name="Hum. Mol. Genet.">
        <title>Non-syndromic vestibular disorder with otoconial agenesis in tilted/mergulhador mice caused by mutations in otopetrin 1.</title>
        <authorList>
            <person name="Hurle B."/>
            <person name="Ignatova E."/>
            <person name="Massironi S.M."/>
            <person name="Mashimo T."/>
            <person name="Rios X."/>
            <person name="Thalmann I."/>
            <person name="Thalmann R."/>
            <person name="Ornitz D.M."/>
        </authorList>
    </citation>
    <scope>IDENTIFICATION</scope>
</reference>
<reference key="3">
    <citation type="journal article" date="2008" name="Proc. Natl. Acad. Sci. U.S.A.">
        <title>A quantitative atlas of mitotic phosphorylation.</title>
        <authorList>
            <person name="Dephoure N."/>
            <person name="Zhou C."/>
            <person name="Villen J."/>
            <person name="Beausoleil S.A."/>
            <person name="Bakalarski C.E."/>
            <person name="Elledge S.J."/>
            <person name="Gygi S.P."/>
        </authorList>
    </citation>
    <scope>PHOSPHORYLATION [LARGE SCALE ANALYSIS] AT SER-21 AND SER-23</scope>
    <scope>IDENTIFICATION BY MASS SPECTROMETRY [LARGE SCALE ANALYSIS]</scope>
    <source>
        <tissue>Cervix carcinoma</tissue>
    </source>
</reference>
<keyword id="KW-0025">Alternative splicing</keyword>
<keyword id="KW-1003">Cell membrane</keyword>
<keyword id="KW-0375">Hydrogen ion transport</keyword>
<keyword id="KW-0407">Ion channel</keyword>
<keyword id="KW-0406">Ion transport</keyword>
<keyword id="KW-0472">Membrane</keyword>
<keyword id="KW-0597">Phosphoprotein</keyword>
<keyword id="KW-1267">Proteomics identification</keyword>
<keyword id="KW-1185">Reference proteome</keyword>
<keyword id="KW-0812">Transmembrane</keyword>
<keyword id="KW-1133">Transmembrane helix</keyword>
<keyword id="KW-0813">Transport</keyword>
<name>OTOP3_HUMAN</name>
<comment type="function">
    <text evidence="2">Proton-selective channel gated by extracellular protons.</text>
</comment>
<comment type="catalytic activity">
    <reaction evidence="2">
        <text>H(+)(in) = H(+)(out)</text>
        <dbReference type="Rhea" id="RHEA:34979"/>
        <dbReference type="ChEBI" id="CHEBI:15378"/>
    </reaction>
</comment>
<comment type="activity regulation">
    <text evidence="2">Activated by extracellular acidification (By similarity). Activated by Zn(2+) under non-acidic conditions (By similarity).</text>
</comment>
<comment type="subunit">
    <text evidence="1">Homodimer.</text>
</comment>
<comment type="interaction">
    <interactant intactId="EBI-12853910">
        <id>Q7RTS5</id>
    </interactant>
    <interactant intactId="EBI-372265">
        <id>P21964</id>
        <label>COMT</label>
    </interactant>
    <organismsDiffer>false</organismsDiffer>
    <experiments>3</experiments>
</comment>
<comment type="interaction">
    <interactant intactId="EBI-12853910">
        <id>Q7RTS5</id>
    </interactant>
    <interactant intactId="EBI-3915253">
        <id>Q15125</id>
        <label>EBP</label>
    </interactant>
    <organismsDiffer>false</organismsDiffer>
    <experiments>3</experiments>
</comment>
<comment type="interaction">
    <interactant intactId="EBI-12853910">
        <id>Q7RTS5</id>
    </interactant>
    <interactant intactId="EBI-18938272">
        <id>Q96KR6</id>
        <label>FAM210B</label>
    </interactant>
    <organismsDiffer>false</organismsDiffer>
    <experiments>3</experiments>
</comment>
<comment type="interaction">
    <interactant intactId="EBI-12853910">
        <id>Q7RTS5</id>
    </interactant>
    <interactant intactId="EBI-3923031">
        <id>Q14973</id>
        <label>SLC10A1</label>
    </interactant>
    <organismsDiffer>false</organismsDiffer>
    <experiments>3</experiments>
</comment>
<comment type="interaction">
    <interactant intactId="EBI-12853910">
        <id>Q7RTS5</id>
    </interactant>
    <interactant intactId="EBI-12808018">
        <id>Q9UKG4</id>
        <label>SLC13A4</label>
    </interactant>
    <organismsDiffer>false</organismsDiffer>
    <experiments>3</experiments>
</comment>
<comment type="interaction">
    <interactant intactId="EBI-12853910">
        <id>Q7RTS5</id>
    </interactant>
    <interactant intactId="EBI-10982110">
        <id>Q96Q45-2</id>
        <label>TMEM237</label>
    </interactant>
    <organismsDiffer>false</organismsDiffer>
    <experiments>3</experiments>
</comment>
<comment type="interaction">
    <interactant intactId="EBI-12853910">
        <id>Q7RTS5</id>
    </interactant>
    <interactant intactId="EBI-3892947">
        <id>Q5T4F4</id>
        <label>ZFYVE27</label>
    </interactant>
    <organismsDiffer>false</organismsDiffer>
    <experiments>3</experiments>
</comment>
<comment type="subcellular location">
    <subcellularLocation>
        <location evidence="2">Cell membrane</location>
        <topology evidence="1">Multi-pass membrane protein</topology>
    </subcellularLocation>
</comment>
<comment type="alternative products">
    <event type="alternative splicing"/>
    <isoform>
        <id>Q7RTS5-1</id>
        <name>1</name>
        <sequence type="displayed"/>
    </isoform>
    <isoform>
        <id>Q7RTS5-2</id>
        <name>2</name>
        <sequence type="described" ref="VSP_062265"/>
    </isoform>
</comment>
<comment type="similarity">
    <text evidence="5">Belongs to the otopetrin family.</text>
</comment>
<organism>
    <name type="scientific">Homo sapiens</name>
    <name type="common">Human</name>
    <dbReference type="NCBI Taxonomy" id="9606"/>
    <lineage>
        <taxon>Eukaryota</taxon>
        <taxon>Metazoa</taxon>
        <taxon>Chordata</taxon>
        <taxon>Craniata</taxon>
        <taxon>Vertebrata</taxon>
        <taxon>Euteleostomi</taxon>
        <taxon>Mammalia</taxon>
        <taxon>Eutheria</taxon>
        <taxon>Euarchontoglires</taxon>
        <taxon>Primates</taxon>
        <taxon>Haplorrhini</taxon>
        <taxon>Catarrhini</taxon>
        <taxon>Hominidae</taxon>
        <taxon>Homo</taxon>
    </lineage>
</organism>
<protein>
    <recommendedName>
        <fullName evidence="5">Proton channel OTOP3</fullName>
    </recommendedName>
    <alternativeName>
        <fullName evidence="4">Otopetrin-3</fullName>
    </alternativeName>
</protein>